<dbReference type="EMBL" id="AF369567">
    <property type="protein sequence ID" value="AAK53799.2"/>
    <property type="molecule type" value="mRNA"/>
</dbReference>
<dbReference type="EMBL" id="AC005850">
    <property type="protein sequence ID" value="AAD25552.1"/>
    <property type="molecule type" value="Genomic_DNA"/>
</dbReference>
<dbReference type="EMBL" id="CP002684">
    <property type="protein sequence ID" value="AEE33851.1"/>
    <property type="molecule type" value="Genomic_DNA"/>
</dbReference>
<dbReference type="PIR" id="H96640">
    <property type="entry name" value="H96640"/>
</dbReference>
<dbReference type="RefSeq" id="NP_176350.1">
    <molecule id="Q94KB7-1"/>
    <property type="nucleotide sequence ID" value="NM_104836.2"/>
</dbReference>
<dbReference type="SMR" id="Q94KB7"/>
<dbReference type="BioGRID" id="27673">
    <property type="interactions" value="13"/>
</dbReference>
<dbReference type="FunCoup" id="Q94KB7">
    <property type="interactions" value="127"/>
</dbReference>
<dbReference type="IntAct" id="Q94KB7">
    <property type="interactions" value="11"/>
</dbReference>
<dbReference type="STRING" id="3702.Q94KB7"/>
<dbReference type="iPTMnet" id="Q94KB7"/>
<dbReference type="PaxDb" id="3702-AT1G61560.1"/>
<dbReference type="ProteomicsDB" id="250934">
    <molecule id="Q94KB7-1"/>
</dbReference>
<dbReference type="EnsemblPlants" id="AT1G61560.1">
    <molecule id="Q94KB7-1"/>
    <property type="protein sequence ID" value="AT1G61560.1"/>
    <property type="gene ID" value="AT1G61560"/>
</dbReference>
<dbReference type="GeneID" id="842450"/>
<dbReference type="Gramene" id="AT1G61560.1">
    <molecule id="Q94KB7-1"/>
    <property type="protein sequence ID" value="AT1G61560.1"/>
    <property type="gene ID" value="AT1G61560"/>
</dbReference>
<dbReference type="KEGG" id="ath:AT1G61560"/>
<dbReference type="Araport" id="AT1G61560"/>
<dbReference type="TAIR" id="AT1G61560">
    <property type="gene designation" value="MLO6"/>
</dbReference>
<dbReference type="eggNOG" id="ENOG502QVKX">
    <property type="taxonomic scope" value="Eukaryota"/>
</dbReference>
<dbReference type="HOGENOM" id="CLU_024720_1_0_1"/>
<dbReference type="InParanoid" id="Q94KB7"/>
<dbReference type="PhylomeDB" id="Q94KB7"/>
<dbReference type="PRO" id="PR:Q94KB7"/>
<dbReference type="Proteomes" id="UP000006548">
    <property type="component" value="Chromosome 1"/>
</dbReference>
<dbReference type="ExpressionAtlas" id="Q94KB7">
    <property type="expression patterns" value="baseline and differential"/>
</dbReference>
<dbReference type="GO" id="GO:0005886">
    <property type="term" value="C:plasma membrane"/>
    <property type="evidence" value="ECO:0000304"/>
    <property type="project" value="TAIR"/>
</dbReference>
<dbReference type="GO" id="GO:0005516">
    <property type="term" value="F:calmodulin binding"/>
    <property type="evidence" value="ECO:0007669"/>
    <property type="project" value="UniProtKB-KW"/>
</dbReference>
<dbReference type="GO" id="GO:0050832">
    <property type="term" value="P:defense response to fungus"/>
    <property type="evidence" value="ECO:0000315"/>
    <property type="project" value="TAIR"/>
</dbReference>
<dbReference type="InterPro" id="IPR004326">
    <property type="entry name" value="Mlo"/>
</dbReference>
<dbReference type="PANTHER" id="PTHR31942">
    <property type="entry name" value="MLO-LIKE PROTEIN 1"/>
    <property type="match status" value="1"/>
</dbReference>
<dbReference type="PANTHER" id="PTHR31942:SF80">
    <property type="entry name" value="MLO-LIKE PROTEIN 6"/>
    <property type="match status" value="1"/>
</dbReference>
<dbReference type="Pfam" id="PF03094">
    <property type="entry name" value="Mlo"/>
    <property type="match status" value="1"/>
</dbReference>
<reference key="1">
    <citation type="journal article" date="2003" name="J. Mol. Evol.">
        <title>Molecular phylogeny and evolution of the plant-specific seven-transmembrane MLO family.</title>
        <authorList>
            <person name="Devoto A."/>
            <person name="Hartmann H.A."/>
            <person name="Piffanelli P."/>
            <person name="Elliott C."/>
            <person name="Simmons C."/>
            <person name="Taramino G."/>
            <person name="Goh C.-S."/>
            <person name="Cohen F.E."/>
            <person name="Emerson B.C."/>
            <person name="Schulze-Lefert P."/>
            <person name="Panstruga R."/>
        </authorList>
    </citation>
    <scope>NUCLEOTIDE SEQUENCE [MRNA]</scope>
</reference>
<reference key="2">
    <citation type="journal article" date="2000" name="Nature">
        <title>Sequence and analysis of chromosome 1 of the plant Arabidopsis thaliana.</title>
        <authorList>
            <person name="Theologis A."/>
            <person name="Ecker J.R."/>
            <person name="Palm C.J."/>
            <person name="Federspiel N.A."/>
            <person name="Kaul S."/>
            <person name="White O."/>
            <person name="Alonso J."/>
            <person name="Altafi H."/>
            <person name="Araujo R."/>
            <person name="Bowman C.L."/>
            <person name="Brooks S.Y."/>
            <person name="Buehler E."/>
            <person name="Chan A."/>
            <person name="Chao Q."/>
            <person name="Chen H."/>
            <person name="Cheuk R.F."/>
            <person name="Chin C.W."/>
            <person name="Chung M.K."/>
            <person name="Conn L."/>
            <person name="Conway A.B."/>
            <person name="Conway A.R."/>
            <person name="Creasy T.H."/>
            <person name="Dewar K."/>
            <person name="Dunn P."/>
            <person name="Etgu P."/>
            <person name="Feldblyum T.V."/>
            <person name="Feng J.-D."/>
            <person name="Fong B."/>
            <person name="Fujii C.Y."/>
            <person name="Gill J.E."/>
            <person name="Goldsmith A.D."/>
            <person name="Haas B."/>
            <person name="Hansen N.F."/>
            <person name="Hughes B."/>
            <person name="Huizar L."/>
            <person name="Hunter J.L."/>
            <person name="Jenkins J."/>
            <person name="Johnson-Hopson C."/>
            <person name="Khan S."/>
            <person name="Khaykin E."/>
            <person name="Kim C.J."/>
            <person name="Koo H.L."/>
            <person name="Kremenetskaia I."/>
            <person name="Kurtz D.B."/>
            <person name="Kwan A."/>
            <person name="Lam B."/>
            <person name="Langin-Hooper S."/>
            <person name="Lee A."/>
            <person name="Lee J.M."/>
            <person name="Lenz C.A."/>
            <person name="Li J.H."/>
            <person name="Li Y.-P."/>
            <person name="Lin X."/>
            <person name="Liu S.X."/>
            <person name="Liu Z.A."/>
            <person name="Luros J.S."/>
            <person name="Maiti R."/>
            <person name="Marziali A."/>
            <person name="Militscher J."/>
            <person name="Miranda M."/>
            <person name="Nguyen M."/>
            <person name="Nierman W.C."/>
            <person name="Osborne B.I."/>
            <person name="Pai G."/>
            <person name="Peterson J."/>
            <person name="Pham P.K."/>
            <person name="Rizzo M."/>
            <person name="Rooney T."/>
            <person name="Rowley D."/>
            <person name="Sakano H."/>
            <person name="Salzberg S.L."/>
            <person name="Schwartz J.R."/>
            <person name="Shinn P."/>
            <person name="Southwick A.M."/>
            <person name="Sun H."/>
            <person name="Tallon L.J."/>
            <person name="Tambunga G."/>
            <person name="Toriumi M.J."/>
            <person name="Town C.D."/>
            <person name="Utterback T."/>
            <person name="Van Aken S."/>
            <person name="Vaysberg M."/>
            <person name="Vysotskaia V.S."/>
            <person name="Walker M."/>
            <person name="Wu D."/>
            <person name="Yu G."/>
            <person name="Fraser C.M."/>
            <person name="Venter J.C."/>
            <person name="Davis R.W."/>
        </authorList>
    </citation>
    <scope>NUCLEOTIDE SEQUENCE [LARGE SCALE GENOMIC DNA]</scope>
    <source>
        <strain>cv. Columbia</strain>
    </source>
</reference>
<reference key="3">
    <citation type="journal article" date="2017" name="Plant J.">
        <title>Araport11: a complete reannotation of the Arabidopsis thaliana reference genome.</title>
        <authorList>
            <person name="Cheng C.Y."/>
            <person name="Krishnakumar V."/>
            <person name="Chan A.P."/>
            <person name="Thibaud-Nissen F."/>
            <person name="Schobel S."/>
            <person name="Town C.D."/>
        </authorList>
    </citation>
    <scope>GENOME REANNOTATION</scope>
    <source>
        <strain>cv. Columbia</strain>
    </source>
</reference>
<protein>
    <recommendedName>
        <fullName>MLO-like protein 6</fullName>
        <shortName>AtMlo6</shortName>
    </recommendedName>
</protein>
<organism>
    <name type="scientific">Arabidopsis thaliana</name>
    <name type="common">Mouse-ear cress</name>
    <dbReference type="NCBI Taxonomy" id="3702"/>
    <lineage>
        <taxon>Eukaryota</taxon>
        <taxon>Viridiplantae</taxon>
        <taxon>Streptophyta</taxon>
        <taxon>Embryophyta</taxon>
        <taxon>Tracheophyta</taxon>
        <taxon>Spermatophyta</taxon>
        <taxon>Magnoliopsida</taxon>
        <taxon>eudicotyledons</taxon>
        <taxon>Gunneridae</taxon>
        <taxon>Pentapetalae</taxon>
        <taxon>rosids</taxon>
        <taxon>malvids</taxon>
        <taxon>Brassicales</taxon>
        <taxon>Brassicaceae</taxon>
        <taxon>Camelineae</taxon>
        <taxon>Arabidopsis</taxon>
    </lineage>
</organism>
<proteinExistence type="evidence at transcript level"/>
<comment type="function">
    <text evidence="1">May be involved in modulation of pathogen defense and leaf cell death. Activity seems to be regulated by Ca(2+)-dependent calmodulin binding and seems not to require heterotrimeric G proteins (By similarity).</text>
</comment>
<comment type="subcellular location">
    <subcellularLocation>
        <location evidence="1">Membrane</location>
        <topology evidence="1">Multi-pass membrane protein</topology>
    </subcellularLocation>
</comment>
<comment type="alternative products">
    <event type="alternative splicing"/>
    <isoform>
        <id>Q94KB7-1</id>
        <name>1</name>
        <sequence type="displayed"/>
    </isoform>
    <text>A number of isoforms are produced. According to EST sequences.</text>
</comment>
<comment type="domain">
    <text evidence="1">The C-terminus contains a calmodulin-binding domain, which binds calmodulin in a calcium-dependent fashion.</text>
</comment>
<comment type="similarity">
    <text evidence="4">Belongs to the MLO family.</text>
</comment>
<evidence type="ECO:0000250" key="1"/>
<evidence type="ECO:0000255" key="2"/>
<evidence type="ECO:0000256" key="3">
    <source>
        <dbReference type="SAM" id="MobiDB-lite"/>
    </source>
</evidence>
<evidence type="ECO:0000305" key="4"/>
<gene>
    <name type="primary">MLO6</name>
    <name type="ordered locus">At1g61560</name>
    <name type="ORF">T25B24.9</name>
</gene>
<feature type="chain" id="PRO_0000209936" description="MLO-like protein 6">
    <location>
        <begin position="1"/>
        <end position="583"/>
    </location>
</feature>
<feature type="topological domain" description="Extracellular" evidence="2">
    <location>
        <begin position="1"/>
        <end position="15"/>
    </location>
</feature>
<feature type="transmembrane region" description="Helical; Name=1" evidence="2">
    <location>
        <begin position="16"/>
        <end position="36"/>
    </location>
</feature>
<feature type="topological domain" description="Cytoplasmic" evidence="2">
    <location>
        <begin position="37"/>
        <end position="61"/>
    </location>
</feature>
<feature type="transmembrane region" description="Helical; Name=2" evidence="2">
    <location>
        <begin position="62"/>
        <end position="82"/>
    </location>
</feature>
<feature type="topological domain" description="Extracellular" evidence="2">
    <location>
        <begin position="83"/>
        <end position="161"/>
    </location>
</feature>
<feature type="transmembrane region" description="Helical; Name=3" evidence="2">
    <location>
        <begin position="162"/>
        <end position="182"/>
    </location>
</feature>
<feature type="topological domain" description="Cytoplasmic" evidence="2">
    <location>
        <begin position="183"/>
        <end position="284"/>
    </location>
</feature>
<feature type="transmembrane region" description="Helical; Name=4" evidence="2">
    <location>
        <begin position="285"/>
        <end position="305"/>
    </location>
</feature>
<feature type="topological domain" description="Extracellular" evidence="2">
    <location>
        <begin position="306"/>
        <end position="314"/>
    </location>
</feature>
<feature type="transmembrane region" description="Helical; Name=5" evidence="2">
    <location>
        <begin position="315"/>
        <end position="335"/>
    </location>
</feature>
<feature type="topological domain" description="Cytoplasmic" evidence="2">
    <location>
        <begin position="336"/>
        <end position="368"/>
    </location>
</feature>
<feature type="transmembrane region" description="Helical; Name=6" evidence="2">
    <location>
        <begin position="369"/>
        <end position="389"/>
    </location>
</feature>
<feature type="topological domain" description="Extracellular" evidence="2">
    <location>
        <begin position="390"/>
        <end position="411"/>
    </location>
</feature>
<feature type="transmembrane region" description="Helical; Name=7" evidence="2">
    <location>
        <begin position="412"/>
        <end position="432"/>
    </location>
</feature>
<feature type="topological domain" description="Cytoplasmic" evidence="2">
    <location>
        <begin position="433"/>
        <end position="583"/>
    </location>
</feature>
<feature type="region of interest" description="Calmodulin-binding">
    <location>
        <begin position="447"/>
        <end position="468"/>
    </location>
</feature>
<feature type="region of interest" description="Disordered" evidence="3">
    <location>
        <begin position="461"/>
        <end position="583"/>
    </location>
</feature>
<feature type="compositionally biased region" description="Low complexity" evidence="3">
    <location>
        <begin position="470"/>
        <end position="484"/>
    </location>
</feature>
<feature type="compositionally biased region" description="Basic and acidic residues" evidence="3">
    <location>
        <begin position="541"/>
        <end position="551"/>
    </location>
</feature>
<keyword id="KW-0025">Alternative splicing</keyword>
<keyword id="KW-0112">Calmodulin-binding</keyword>
<keyword id="KW-0472">Membrane</keyword>
<keyword id="KW-0568">Pathogenesis-related protein</keyword>
<keyword id="KW-0611">Plant defense</keyword>
<keyword id="KW-1185">Reference proteome</keyword>
<keyword id="KW-0812">Transmembrane</keyword>
<keyword id="KW-1133">Transmembrane helix</keyword>
<accession>Q94KB7</accession>
<accession>Q9SY94</accession>
<sequence>MADQVKEKTLEETSTWAVAVVCFVLLLISIVIEKLIHKIGSWFKKKNKKALYEALEKVKAELMLMGFISLLLTIGQGYISNICIPKNIAASMHPCSASEEARKYGKKDVPKEDEEENLRRKLLQLVDSLIPRRSLATKGYDKCAEKGKVAFVSAYGMHQLHIFIFVLAVCHVIYCIVTYALGKTKMRRWKKWEEETKTIEYQYSHDPERFRFARDTSFGRRHLSFWSKSTITLWIVCFFRQFFRSVTKVDYLTLRHGFIMAHLAPGSDARFDFRKYIQRSLEEDFKTIVEINPVIWFIAVLFLLTNTNGLNSYLWLPFIPFIVILIVGTKLQVIITKLGLRIQEKGDVVKGTPLVQPGDHFFWFGRPRFILFLIHLVLFTNAFQLAFFVWSTYEFGLKNCFHESRVDVIIRISIGLLVQILCSYVTLPLYALVTQMGSKMKPTVFNERVATALKSWHHTAKKNIKHGRTSESTTPFSSRPTTPTHGSSPIHLLRNAPHKRSRSVDESFANSFSPRNSDFDSWDPESQHETAETSNSNHRSRFGEEESEKKFVSSSVELPPGPGQIRTQHEISTISLRDFSFKR</sequence>
<name>MLO6_ARATH</name>